<feature type="chain" id="PRO_0000285818" description="DAZ-associated protein 2">
    <location>
        <begin position="1"/>
        <end position="168"/>
    </location>
</feature>
<feature type="region of interest" description="Disordered" evidence="3">
    <location>
        <begin position="1"/>
        <end position="25"/>
    </location>
</feature>
<feature type="short sequence motif" description="PPAY" evidence="1">
    <location>
        <begin position="39"/>
        <end position="42"/>
    </location>
</feature>
<feature type="compositionally biased region" description="Low complexity" evidence="3">
    <location>
        <begin position="1"/>
        <end position="13"/>
    </location>
</feature>
<feature type="modified residue" description="Phosphoserine" evidence="1">
    <location>
        <position position="77"/>
    </location>
</feature>
<proteinExistence type="evidence at transcript level"/>
<sequence>MNSKGQYPTQPTYPVQPPGNPVYPQTLHLPQAPPYTDAPPAYSELYRPSFVHPGAATVPTMSAAFPGASLYLPMAQSVAVGPLGSTIPMAYYPVSPIYPPGSTVLVEGGYDAGARFGAGATAGNIPPPPPGCPPNAAQLAVMQGANVLVTQRKGNFFMGGSDGGYTIW</sequence>
<protein>
    <recommendedName>
        <fullName evidence="1">DAZ-associated protein 2</fullName>
    </recommendedName>
    <alternativeName>
        <fullName>Deleted in azoospermia-associated protein 2</fullName>
    </alternativeName>
    <alternativeName>
        <fullName evidence="1">Proline-rich transcript in brain protein</fullName>
    </alternativeName>
</protein>
<accession>Q4R5H7</accession>
<dbReference type="EMBL" id="AB169566">
    <property type="protein sequence ID" value="BAE01648.1"/>
    <property type="molecule type" value="mRNA"/>
</dbReference>
<dbReference type="RefSeq" id="NP_001271055.1">
    <property type="nucleotide sequence ID" value="NM_001284126.1"/>
</dbReference>
<dbReference type="RefSeq" id="XP_045221202.1">
    <property type="nucleotide sequence ID" value="XM_045365267.2"/>
</dbReference>
<dbReference type="STRING" id="9541.ENSMFAP00000016247"/>
<dbReference type="Ensembl" id="ENSMFAT00000021034.2">
    <property type="protein sequence ID" value="ENSMFAP00000009016.2"/>
    <property type="gene ID" value="ENSMFAG00000001009.2"/>
</dbReference>
<dbReference type="GeneID" id="101926026"/>
<dbReference type="eggNOG" id="ENOG502QTNQ">
    <property type="taxonomic scope" value="Eukaryota"/>
</dbReference>
<dbReference type="GeneTree" id="ENSGT00390000000685"/>
<dbReference type="Proteomes" id="UP000233100">
    <property type="component" value="Chromosome 11"/>
</dbReference>
<dbReference type="Bgee" id="ENSMFAG00000001009">
    <property type="expression patterns" value="Expressed in spleen and 13 other cell types or tissues"/>
</dbReference>
<dbReference type="GO" id="GO:0005737">
    <property type="term" value="C:cytoplasm"/>
    <property type="evidence" value="ECO:0000250"/>
    <property type="project" value="UniProtKB"/>
</dbReference>
<dbReference type="GO" id="GO:0010494">
    <property type="term" value="C:cytoplasmic stress granule"/>
    <property type="evidence" value="ECO:0000250"/>
    <property type="project" value="UniProtKB"/>
</dbReference>
<dbReference type="GO" id="GO:0016604">
    <property type="term" value="C:nuclear body"/>
    <property type="evidence" value="ECO:0000250"/>
    <property type="project" value="UniProtKB"/>
</dbReference>
<dbReference type="GO" id="GO:0016607">
    <property type="term" value="C:nuclear speck"/>
    <property type="evidence" value="ECO:0000250"/>
    <property type="project" value="UniProtKB"/>
</dbReference>
<dbReference type="GO" id="GO:0005634">
    <property type="term" value="C:nucleus"/>
    <property type="evidence" value="ECO:0000250"/>
    <property type="project" value="UniProtKB"/>
</dbReference>
<dbReference type="GO" id="GO:0002039">
    <property type="term" value="F:p53 binding"/>
    <property type="evidence" value="ECO:0000250"/>
    <property type="project" value="UniProtKB"/>
</dbReference>
<dbReference type="GO" id="GO:0120283">
    <property type="term" value="F:protein serine/threonine kinase binding"/>
    <property type="evidence" value="ECO:0000250"/>
    <property type="project" value="UniProtKB"/>
</dbReference>
<dbReference type="GO" id="GO:0031625">
    <property type="term" value="F:ubiquitin protein ligase binding"/>
    <property type="evidence" value="ECO:0000250"/>
    <property type="project" value="UniProtKB"/>
</dbReference>
<dbReference type="GO" id="GO:1905636">
    <property type="term" value="P:positive regulation of RNA polymerase II regulatory region sequence-specific DNA binding"/>
    <property type="evidence" value="ECO:0000250"/>
    <property type="project" value="UniProtKB"/>
</dbReference>
<dbReference type="GO" id="GO:0031648">
    <property type="term" value="P:protein destabilization"/>
    <property type="evidence" value="ECO:0000250"/>
    <property type="project" value="UniProtKB"/>
</dbReference>
<dbReference type="GO" id="GO:0034063">
    <property type="term" value="P:stress granule assembly"/>
    <property type="evidence" value="ECO:0000250"/>
    <property type="project" value="UniProtKB"/>
</dbReference>
<dbReference type="InterPro" id="IPR022730">
    <property type="entry name" value="DAZ_assoc-2"/>
</dbReference>
<dbReference type="PANTHER" id="PTHR31638">
    <property type="entry name" value="DAZ-ASSOCIATED PROTEIN 2"/>
    <property type="match status" value="1"/>
</dbReference>
<dbReference type="PANTHER" id="PTHR31638:SF3">
    <property type="entry name" value="DAZ-ASSOCIATED PROTEIN 2"/>
    <property type="match status" value="1"/>
</dbReference>
<dbReference type="Pfam" id="PF11029">
    <property type="entry name" value="DAZAP2"/>
    <property type="match status" value="1"/>
</dbReference>
<name>DAZP2_MACFA</name>
<reference key="1">
    <citation type="submission" date="2005-06" db="EMBL/GenBank/DDBJ databases">
        <title>DNA sequences of macaque genes expressed in brain or testis and its evolutionary implications.</title>
        <authorList>
            <consortium name="International consortium for macaque cDNA sequencing and analysis"/>
        </authorList>
    </citation>
    <scope>NUCLEOTIDE SEQUENCE [LARGE SCALE MRNA]</scope>
    <source>
        <tissue>Frontal cortex</tissue>
    </source>
</reference>
<keyword id="KW-0963">Cytoplasm</keyword>
<keyword id="KW-0539">Nucleus</keyword>
<keyword id="KW-0597">Phosphoprotein</keyword>
<keyword id="KW-1185">Reference proteome</keyword>
<keyword id="KW-0832">Ubl conjugation</keyword>
<organism>
    <name type="scientific">Macaca fascicularis</name>
    <name type="common">Crab-eating macaque</name>
    <name type="synonym">Cynomolgus monkey</name>
    <dbReference type="NCBI Taxonomy" id="9541"/>
    <lineage>
        <taxon>Eukaryota</taxon>
        <taxon>Metazoa</taxon>
        <taxon>Chordata</taxon>
        <taxon>Craniata</taxon>
        <taxon>Vertebrata</taxon>
        <taxon>Euteleostomi</taxon>
        <taxon>Mammalia</taxon>
        <taxon>Eutheria</taxon>
        <taxon>Euarchontoglires</taxon>
        <taxon>Primates</taxon>
        <taxon>Haplorrhini</taxon>
        <taxon>Catarrhini</taxon>
        <taxon>Cercopithecidae</taxon>
        <taxon>Cercopithecinae</taxon>
        <taxon>Macaca</taxon>
    </lineage>
</organism>
<comment type="function">
    <text evidence="1 2">In unstressed cells, promotes SIAH1-mediated polyubiquitination and degradation of the serine/threonine-protein kinase HIPK2, probably by acting as a loading factor that potentiates complex formation between HIPK2 and ubiquitin ligase SIAH1 (By similarity). In response to DNA damage, localizes to the nucleus following phosphorylation by HIPK2 and modulates the expression of a subset of TP53/p53 target genes by binding to TP53 at target gene promoters (By similarity). This limits the expression of a number of cell death-mediating TP53 target genes, reducing DNA damage-induced cell death (By similarity). Enhances the binding of transcription factor TCF7L2/TCF4, a Wnt signaling pathway effector, to the promoters of target genes (By similarity). Plays a role in stress granule formation (By similarity).</text>
</comment>
<comment type="subunit">
    <text evidence="1 2">Interacts with SOX6. Interacts with DAZ1 and DAZL. Interacts with IL17RB. May interact with FAM168B. Interacts with INCA1. Interacts with EIF4G1 and EIF4G2 (By similarity). Interacts (via PPAY motif) with NEDD4 (via WW domains) (By similarity). Interacts with transcription factor TCF4; the interaction results in localization of DAZAP2 to the nucleus (By similarity). Interacts with transcription factors TCF7 and TCF7L1 (By similarity). Interacts with transcription factor LEF1 (By similarity). Interacts with serine/threonine-protein kinase HIPK2; the interaction results in phosphorylation of DAZAP2 which causes localization of DAZAP2 to the nucleus, reduces interaction of DAZAP2 with HIPK2 and prevents DAZAP2-dependent degradation of HIPK2 (By similarity). Interacts with ubiquitin ligase SIAH1; the interaction is decreased following phosphorylation of DAZAP2 by HIPK2 (By similarity). Interacts with TP53; the interaction is triggered by DNA damage (By similarity).</text>
</comment>
<comment type="subcellular location">
    <subcellularLocation>
        <location evidence="1">Cytoplasm</location>
    </subcellularLocation>
    <subcellularLocation>
        <location evidence="1">Nucleus</location>
    </subcellularLocation>
    <subcellularLocation>
        <location evidence="1">Nucleus speckle</location>
    </subcellularLocation>
    <subcellularLocation>
        <location evidence="1">Nucleus</location>
        <location evidence="1">Nuclear body</location>
    </subcellularLocation>
    <subcellularLocation>
        <location evidence="1">Cytoplasm</location>
        <location evidence="1">Stress granule</location>
    </subcellularLocation>
    <text evidence="1">Predominantly nuclear in macrophages, stimulation of IL17RB with its ligand IL17E induces accumulation in the cytoplasm (By similarity). Predominantly cytoplasmic when unphosphorylated and localizes to the nucleus following phosphorylation by HIPK2 (By similarity). Localizes to stress granules under cellular stress conditions (By similarity).</text>
</comment>
<comment type="PTM">
    <text evidence="1">Ubiquitinated by SMURF2, leading to proteasomal degradation. Ubiquitinated by NEDD4, leading to proteasomal degradation.</text>
</comment>
<comment type="PTM">
    <text evidence="1">Following DNA damage, phosphorylated by HIPK2 which promotes DAZAP2 localization to the nucleus, reduces interaction of DAZAP2 with HIPK2 and SIAH1, and prevents DAZAP2-dependent ubiquitination of HIPK2 by E3 ubiquitin-protein ligase SIAH1 and subsequent HIPK2 proteasomal degradation.</text>
</comment>
<evidence type="ECO:0000250" key="1">
    <source>
        <dbReference type="UniProtKB" id="Q15038"/>
    </source>
</evidence>
<evidence type="ECO:0000250" key="2">
    <source>
        <dbReference type="UniProtKB" id="Q9DCP9"/>
    </source>
</evidence>
<evidence type="ECO:0000256" key="3">
    <source>
        <dbReference type="SAM" id="MobiDB-lite"/>
    </source>
</evidence>
<gene>
    <name evidence="1" type="primary">DAZAP2</name>
    <name evidence="1" type="synonym">PRTB</name>
    <name type="ORF">QflA-14287</name>
</gene>